<sequence length="643" mass="70303">MPAIGIDLGTTYSCVGVYQHGKVEIIANDQGNRTTPSYVAFTDSERLIGDPAKNQVAMNPRNTVFDAKRLIGRKYDDPKIAEDMKHWPFKVVSDCGKPKIGVEYKGESKRFAPEEISSMVLAKMKETAEAYLGESITDAVITVPAYFNDSQRQATKDAGHIAGLNVLRIINEPTAAALAYGLDKNLKGERNVLIFDLGGGTFDVSILTIDEGSLFEVRSTAGDTHLGGEDFDNRLVTHLAEEFKRKYKKDLRSNPRALRRLRTAAERAKRTLSSSTEATIEIDALFEGQDFYTKVSRARFEELCADLFRNTLQPVEKALTDAKMDKGQIHDIVLVGGSTRIPKVQSLLQEFFHGKNLNLSINPDEAVAYGAAVQAAILSGDQSGKIQDVLLVDVAPLSLGIETAGGVMTKLIERNCRIPCKQTKTFSTYSDNQPGVSIQVYEGERAMTKDNNALGTFDLSGIPPAPRGVPQIEVTFDLDANGILNVSAKEMSTGKAKNITIKNDKGRLSQAEIDRMVNEAEKYADEDEKQRQRITSRNALESYVFNVKQSVEQAPAGKLDEADKNSVLDKCNDTIRWLDSNTTAEKEEFDHKMEELTRHCSPIMTKMHQQGAGAGAAGGPGANCGQQAGGFGGYSGPTVEEVD</sequence>
<organism evidence="9">
    <name type="scientific">Drosophila simulans</name>
    <name type="common">Fruit fly</name>
    <dbReference type="NCBI Taxonomy" id="7240"/>
    <lineage>
        <taxon>Eukaryota</taxon>
        <taxon>Metazoa</taxon>
        <taxon>Ecdysozoa</taxon>
        <taxon>Arthropoda</taxon>
        <taxon>Hexapoda</taxon>
        <taxon>Insecta</taxon>
        <taxon>Pterygota</taxon>
        <taxon>Neoptera</taxon>
        <taxon>Endopterygota</taxon>
        <taxon>Diptera</taxon>
        <taxon>Brachycera</taxon>
        <taxon>Muscomorpha</taxon>
        <taxon>Ephydroidea</taxon>
        <taxon>Drosophilidae</taxon>
        <taxon>Drosophila</taxon>
        <taxon>Sophophora</taxon>
    </lineage>
</organism>
<keyword id="KW-0067">ATP-binding</keyword>
<keyword id="KW-0547">Nucleotide-binding</keyword>
<keyword id="KW-0346">Stress response</keyword>
<gene>
    <name type="primary">Hsp70Ba</name>
</gene>
<comment type="induction">
    <text evidence="5">Heat shock induces the synthesis of seven proteins at five otherwise inactive sites in the polytene chromosomes of fruit fly larvae. Two separate sites, producing two and three copies, respectively, code for the 70 kDa protein.</text>
</comment>
<comment type="miscellaneous">
    <text evidence="1">Most strains have three copies of the gene coding for this protein at chromosome locus 87C1; two tandemly repeated Hsp70 genes (Hsp70Bb and Hsp70Bc) and one in reverse orientation (Hsp70Ba). Some strains, including that sequenced in the Drosophila genome project have three tandemly repeated Hsp70 genes (Hsp70Bb, Hsp70Bbb and Hsp70Bc).</text>
</comment>
<comment type="similarity">
    <text evidence="2 5">Belongs to the heat shock protein 70 family.</text>
</comment>
<protein>
    <recommendedName>
        <fullName>Major heat shock 70 kDa protein Ba</fullName>
        <shortName>Heat shock protein 70Ba</shortName>
    </recommendedName>
    <alternativeName>
        <fullName>HSP70-87C1</fullName>
    </alternativeName>
</protein>
<reference evidence="9" key="1">
    <citation type="journal article" date="2002" name="J. Mol. Evol.">
        <title>Rapid concerted evolution via gene conversion at the Drosophila hsp70 genes.</title>
        <authorList>
            <person name="Bettencourt B.R."/>
            <person name="Feder M.E."/>
        </authorList>
    </citation>
    <scope>NUCLEOTIDE SEQUENCE [GENOMIC DNA]</scope>
    <source>
        <strain evidence="6">DSR 1</strain>
        <strain evidence="7">DSR 2</strain>
        <strain evidence="8">DSR 3</strain>
        <strain evidence="9">DSR 4</strain>
    </source>
</reference>
<dbReference type="EMBL" id="AF295971">
    <property type="protein sequence ID" value="AAG24842.1"/>
    <property type="molecule type" value="Genomic_DNA"/>
</dbReference>
<dbReference type="EMBL" id="AF295972">
    <property type="protein sequence ID" value="AAG24843.1"/>
    <property type="molecule type" value="Genomic_DNA"/>
</dbReference>
<dbReference type="EMBL" id="AF295973">
    <property type="protein sequence ID" value="AAG24844.1"/>
    <property type="molecule type" value="Genomic_DNA"/>
</dbReference>
<dbReference type="EMBL" id="AF295974">
    <property type="protein sequence ID" value="AAG24845.1"/>
    <property type="molecule type" value="Genomic_DNA"/>
</dbReference>
<dbReference type="SMR" id="Q9GSU4"/>
<dbReference type="OrthoDB" id="7877850at2759"/>
<dbReference type="GO" id="GO:0005524">
    <property type="term" value="F:ATP binding"/>
    <property type="evidence" value="ECO:0007669"/>
    <property type="project" value="UniProtKB-KW"/>
</dbReference>
<dbReference type="GO" id="GO:0140662">
    <property type="term" value="F:ATP-dependent protein folding chaperone"/>
    <property type="evidence" value="ECO:0007669"/>
    <property type="project" value="InterPro"/>
</dbReference>
<dbReference type="CDD" id="cd10233">
    <property type="entry name" value="ASKHA_NBD_HSP70_HSPA1"/>
    <property type="match status" value="1"/>
</dbReference>
<dbReference type="FunFam" id="2.60.34.10:FF:000002">
    <property type="entry name" value="Heat shock 70 kDa"/>
    <property type="match status" value="1"/>
</dbReference>
<dbReference type="FunFam" id="3.90.640.10:FF:000002">
    <property type="entry name" value="Heat shock 70 kDa"/>
    <property type="match status" value="1"/>
</dbReference>
<dbReference type="FunFam" id="3.30.420.40:FF:000172">
    <property type="entry name" value="Heat shock 70 kDa protein"/>
    <property type="match status" value="1"/>
</dbReference>
<dbReference type="FunFam" id="3.30.30.30:FF:000001">
    <property type="entry name" value="heat shock 70 kDa protein-like"/>
    <property type="match status" value="1"/>
</dbReference>
<dbReference type="FunFam" id="1.20.1270.10:FF:000024">
    <property type="entry name" value="Heat shock protein 70"/>
    <property type="match status" value="1"/>
</dbReference>
<dbReference type="FunFam" id="3.30.420.40:FF:000026">
    <property type="entry name" value="Heat shock protein 70"/>
    <property type="match status" value="1"/>
</dbReference>
<dbReference type="Gene3D" id="1.20.1270.10">
    <property type="match status" value="1"/>
</dbReference>
<dbReference type="Gene3D" id="3.30.30.30">
    <property type="match status" value="1"/>
</dbReference>
<dbReference type="Gene3D" id="3.30.420.40">
    <property type="match status" value="2"/>
</dbReference>
<dbReference type="Gene3D" id="3.90.640.10">
    <property type="entry name" value="Actin, Chain A, domain 4"/>
    <property type="match status" value="1"/>
</dbReference>
<dbReference type="Gene3D" id="2.60.34.10">
    <property type="entry name" value="Substrate Binding Domain Of DNAk, Chain A, domain 1"/>
    <property type="match status" value="1"/>
</dbReference>
<dbReference type="InterPro" id="IPR043129">
    <property type="entry name" value="ATPase_NBD"/>
</dbReference>
<dbReference type="InterPro" id="IPR018181">
    <property type="entry name" value="Heat_shock_70_CS"/>
</dbReference>
<dbReference type="InterPro" id="IPR029048">
    <property type="entry name" value="HSP70_C_sf"/>
</dbReference>
<dbReference type="InterPro" id="IPR029047">
    <property type="entry name" value="HSP70_peptide-bd_sf"/>
</dbReference>
<dbReference type="InterPro" id="IPR013126">
    <property type="entry name" value="Hsp_70_fam"/>
</dbReference>
<dbReference type="NCBIfam" id="NF001413">
    <property type="entry name" value="PRK00290.1"/>
    <property type="match status" value="1"/>
</dbReference>
<dbReference type="PANTHER" id="PTHR19375">
    <property type="entry name" value="HEAT SHOCK PROTEIN 70KDA"/>
    <property type="match status" value="1"/>
</dbReference>
<dbReference type="Pfam" id="PF00012">
    <property type="entry name" value="HSP70"/>
    <property type="match status" value="1"/>
</dbReference>
<dbReference type="PRINTS" id="PR00301">
    <property type="entry name" value="HEATSHOCK70"/>
</dbReference>
<dbReference type="SUPFAM" id="SSF53067">
    <property type="entry name" value="Actin-like ATPase domain"/>
    <property type="match status" value="2"/>
</dbReference>
<dbReference type="SUPFAM" id="SSF100934">
    <property type="entry name" value="Heat shock protein 70kD (HSP70), C-terminal subdomain"/>
    <property type="match status" value="1"/>
</dbReference>
<dbReference type="SUPFAM" id="SSF100920">
    <property type="entry name" value="Heat shock protein 70kD (HSP70), peptide-binding domain"/>
    <property type="match status" value="1"/>
</dbReference>
<dbReference type="PROSITE" id="PS00297">
    <property type="entry name" value="HSP70_1"/>
    <property type="match status" value="1"/>
</dbReference>
<dbReference type="PROSITE" id="PS00329">
    <property type="entry name" value="HSP70_2"/>
    <property type="match status" value="1"/>
</dbReference>
<dbReference type="PROSITE" id="PS01036">
    <property type="entry name" value="HSP70_3"/>
    <property type="match status" value="1"/>
</dbReference>
<evidence type="ECO:0000250" key="1">
    <source>
        <dbReference type="UniProtKB" id="P02824"/>
    </source>
</evidence>
<evidence type="ECO:0000255" key="2">
    <source>
        <dbReference type="RuleBase" id="RU003322"/>
    </source>
</evidence>
<evidence type="ECO:0000256" key="3">
    <source>
        <dbReference type="SAM" id="MobiDB-lite"/>
    </source>
</evidence>
<evidence type="ECO:0000269" key="4">
    <source>
    </source>
</evidence>
<evidence type="ECO:0000305" key="5"/>
<evidence type="ECO:0000312" key="6">
    <source>
        <dbReference type="EMBL" id="AAG24842.1"/>
    </source>
</evidence>
<evidence type="ECO:0000312" key="7">
    <source>
        <dbReference type="EMBL" id="AAG24843.1"/>
    </source>
</evidence>
<evidence type="ECO:0000312" key="8">
    <source>
        <dbReference type="EMBL" id="AAG24844.1"/>
    </source>
</evidence>
<evidence type="ECO:0000312" key="9">
    <source>
        <dbReference type="EMBL" id="AAG24845.1"/>
    </source>
</evidence>
<name>HSP72_DROSI</name>
<accession>Q9GSU4</accession>
<accession>Q9GNI6</accession>
<accession>Q9GSU5</accession>
<accession>Q9GSU6</accession>
<proteinExistence type="inferred from homology"/>
<feature type="chain" id="PRO_0000078336" description="Major heat shock 70 kDa protein Ba">
    <location>
        <begin position="1"/>
        <end position="643"/>
    </location>
</feature>
<feature type="region of interest" description="Disordered" evidence="3">
    <location>
        <begin position="611"/>
        <end position="643"/>
    </location>
</feature>
<feature type="compositionally biased region" description="Gly residues" evidence="3">
    <location>
        <begin position="612"/>
        <end position="635"/>
    </location>
</feature>
<feature type="sequence variant" description="In strain: DSR 2." evidence="4">
    <original>I</original>
    <variation>T</variation>
    <location>
        <position position="25"/>
    </location>
</feature>
<feature type="sequence variant" description="In strain: DSR 1." evidence="4">
    <original>T</original>
    <variation>A</variation>
    <location>
        <position position="208"/>
    </location>
</feature>
<feature type="sequence variant" description="In strain: DSR 3." evidence="4">
    <original>F</original>
    <variation>L</variation>
    <location>
        <position position="286"/>
    </location>
</feature>
<feature type="sequence variant" description="In strain: DSR 4." evidence="4">
    <original>D</original>
    <variation>N</variation>
    <location>
        <position position="306"/>
    </location>
</feature>
<feature type="sequence variant" description="In strain: DSR 1." evidence="4">
    <original>N</original>
    <variation>S</variation>
    <location>
        <position position="358"/>
    </location>
</feature>
<feature type="sequence variant" description="In strain: DSR 2." evidence="4">
    <original>I</original>
    <variation>T</variation>
    <location>
        <position position="483"/>
    </location>
</feature>
<feature type="sequence variant" description="In strain: DSR 3." evidence="4">
    <original>A</original>
    <variation>T</variation>
    <location>
        <position position="617"/>
    </location>
</feature>